<sequence length="389" mass="43058">MSVRIVDVREITKPISSPIRNAYIDFTKMTTSLVAVVTDVVREGKRVVGYGFNSNGRYGQGGLIRERFASRILEADPKKLLNEAGDNLDPDKVWAAMMINEKPGGHGERSVAVGTIDMAVWDAVAKIAGKPLFRLLAERHGVKANPRVFVYAAGGYYYPGKGLSMLRGEMRGYLDRGYNVVKMKIGGAPIEEDRMRIEAVLEEIGKDAQLAVDANGRFNLETGIAYAKMLRDYPLFWYEEVGDPLDYALQAALAEFYPGPMATGENLFSHQDARNLLRYGGMRPDRDWLQFDCALSYGLCEYQRTLEVLKTHGWSPSRCIPHGGHQMSLNIAAGLGLGGNESYPDLFQPYGGFPDGVRVENGHITMPDLPGIGFEGKSDLYKEMKALAE</sequence>
<evidence type="ECO:0000269" key="1">
    <source>
    </source>
</evidence>
<evidence type="ECO:0000305" key="2"/>
<evidence type="ECO:0000305" key="3">
    <source>
    </source>
</evidence>
<evidence type="ECO:0007829" key="4">
    <source>
        <dbReference type="PDB" id="1TZZ"/>
    </source>
</evidence>
<gene>
    <name type="primary">tarD</name>
    <name type="ordered locus">bll6730</name>
</gene>
<comment type="function">
    <text evidence="1">Catalyzes the dehydration of D-tartrate to oxaloacetate.</text>
</comment>
<comment type="catalytic activity">
    <reaction evidence="1">
        <text>(S,S)-tartrate = oxaloacetate + H2O</text>
        <dbReference type="Rhea" id="RHEA:18289"/>
        <dbReference type="ChEBI" id="CHEBI:15377"/>
        <dbReference type="ChEBI" id="CHEBI:16452"/>
        <dbReference type="ChEBI" id="CHEBI:30927"/>
        <dbReference type="EC" id="4.2.1.81"/>
    </reaction>
</comment>
<comment type="cofactor">
    <cofactor evidence="1">
        <name>Mg(2+)</name>
        <dbReference type="ChEBI" id="CHEBI:18420"/>
    </cofactor>
    <text evidence="1">Binds 1 Mg(2+) ion per subunit.</text>
</comment>
<comment type="biophysicochemical properties">
    <kinetics>
        <KM evidence="1">0.086 mM for D-tartrate</KM>
        <text>kcat is 7.3 sec(-1) for D-tartrate.</text>
    </kinetics>
</comment>
<comment type="subunit">
    <text evidence="1">Homooctamer; tetramer of dimers.</text>
</comment>
<comment type="miscellaneous">
    <text evidence="3">Reaction mechanism is a simple extension of the two-step reaction catalyzed by other members of the family: Lys-184 initiates the reaction by abstraction of the alpha-proton to generate a Mg(2+)-stabilized enediolate intermediate, and the vinylogous beta-elimination of the 3-OH group is general acid-catalyzed by the His-322, accomplishing the anti-elimination of water. The replacement of the leaving group by solvent-derived hydrogen is stereo-random, suggesting that the enol tautomer of oxaloacetate is the product (PubMed:17144653).</text>
</comment>
<comment type="similarity">
    <text evidence="2">Belongs to the mandelate racemase/muconate lactonizing enzyme family.</text>
</comment>
<accession>Q89FH0</accession>
<dbReference type="EC" id="4.2.1.81"/>
<dbReference type="EMBL" id="BA000040">
    <property type="protein sequence ID" value="BAC51995.1"/>
    <property type="molecule type" value="Genomic_DNA"/>
</dbReference>
<dbReference type="RefSeq" id="NP_773370.1">
    <property type="nucleotide sequence ID" value="NC_004463.1"/>
</dbReference>
<dbReference type="RefSeq" id="WP_011089469.1">
    <property type="nucleotide sequence ID" value="NC_004463.1"/>
</dbReference>
<dbReference type="PDB" id="1TZZ">
    <property type="method" value="X-ray"/>
    <property type="resolution" value="1.86 A"/>
    <property type="chains" value="A/B=1-389"/>
</dbReference>
<dbReference type="PDB" id="2DW6">
    <property type="method" value="X-ray"/>
    <property type="resolution" value="2.30 A"/>
    <property type="chains" value="A/B/C/D=1-389"/>
</dbReference>
<dbReference type="PDB" id="2DW7">
    <property type="method" value="X-ray"/>
    <property type="resolution" value="2.50 A"/>
    <property type="chains" value="A/B/C/D/E/F/G/H/I/J/K/L/M/N/O/P=1-389"/>
</dbReference>
<dbReference type="PDBsum" id="1TZZ"/>
<dbReference type="PDBsum" id="2DW6"/>
<dbReference type="PDBsum" id="2DW7"/>
<dbReference type="SMR" id="Q89FH0"/>
<dbReference type="STRING" id="224911.AAV28_31245"/>
<dbReference type="EnsemblBacteria" id="BAC51995">
    <property type="protein sequence ID" value="BAC51995"/>
    <property type="gene ID" value="BAC51995"/>
</dbReference>
<dbReference type="GeneID" id="46493704"/>
<dbReference type="KEGG" id="bja:bll6730"/>
<dbReference type="PATRIC" id="fig|224911.44.peg.6751"/>
<dbReference type="eggNOG" id="COG4948">
    <property type="taxonomic scope" value="Bacteria"/>
</dbReference>
<dbReference type="HOGENOM" id="CLU_707555_0_0_5"/>
<dbReference type="InParanoid" id="Q89FH0"/>
<dbReference type="OrthoDB" id="9802699at2"/>
<dbReference type="PhylomeDB" id="Q89FH0"/>
<dbReference type="BioCyc" id="MetaCyc:MONOMER-124347"/>
<dbReference type="SABIO-RK" id="Q89FH0"/>
<dbReference type="EvolutionaryTrace" id="Q89FH0"/>
<dbReference type="PRO" id="PR:Q89FH0"/>
<dbReference type="Proteomes" id="UP000002526">
    <property type="component" value="Chromosome"/>
</dbReference>
<dbReference type="GO" id="GO:0047808">
    <property type="term" value="F:D(-)-tartrate dehydratase activity"/>
    <property type="evidence" value="ECO:0000314"/>
    <property type="project" value="UniProtKB"/>
</dbReference>
<dbReference type="GO" id="GO:0016836">
    <property type="term" value="F:hydro-lyase activity"/>
    <property type="evidence" value="ECO:0000318"/>
    <property type="project" value="GO_Central"/>
</dbReference>
<dbReference type="GO" id="GO:0000287">
    <property type="term" value="F:magnesium ion binding"/>
    <property type="evidence" value="ECO:0000314"/>
    <property type="project" value="UniProtKB"/>
</dbReference>
<dbReference type="GO" id="GO:0034194">
    <property type="term" value="P:D-galactonate catabolic process"/>
    <property type="evidence" value="ECO:0000318"/>
    <property type="project" value="GO_Central"/>
</dbReference>
<dbReference type="GO" id="GO:0051260">
    <property type="term" value="P:protein homooligomerization"/>
    <property type="evidence" value="ECO:0000314"/>
    <property type="project" value="UniProtKB"/>
</dbReference>
<dbReference type="CDD" id="cd03326">
    <property type="entry name" value="MR_like_1"/>
    <property type="match status" value="1"/>
</dbReference>
<dbReference type="FunFam" id="3.20.20.120:FF:000018">
    <property type="entry name" value="D(-)-tartrate dehydratase"/>
    <property type="match status" value="1"/>
</dbReference>
<dbReference type="FunFam" id="3.30.390.10:FF:000014">
    <property type="entry name" value="D(-)-tartrate dehydratase"/>
    <property type="match status" value="1"/>
</dbReference>
<dbReference type="Gene3D" id="3.20.20.120">
    <property type="entry name" value="Enolase-like C-terminal domain"/>
    <property type="match status" value="1"/>
</dbReference>
<dbReference type="Gene3D" id="3.30.390.10">
    <property type="entry name" value="Enolase-like, N-terminal domain"/>
    <property type="match status" value="1"/>
</dbReference>
<dbReference type="InterPro" id="IPR034611">
    <property type="entry name" value="D-tartrate_dehydratase"/>
</dbReference>
<dbReference type="InterPro" id="IPR034593">
    <property type="entry name" value="DgoD-like"/>
</dbReference>
<dbReference type="InterPro" id="IPR036849">
    <property type="entry name" value="Enolase-like_C_sf"/>
</dbReference>
<dbReference type="InterPro" id="IPR029017">
    <property type="entry name" value="Enolase-like_N"/>
</dbReference>
<dbReference type="InterPro" id="IPR029065">
    <property type="entry name" value="Enolase_C-like"/>
</dbReference>
<dbReference type="InterPro" id="IPR013342">
    <property type="entry name" value="Mandelate_racemase_C"/>
</dbReference>
<dbReference type="PANTHER" id="PTHR48080:SF5">
    <property type="entry name" value="D(-)-TARTRATE DEHYDRATASE"/>
    <property type="match status" value="1"/>
</dbReference>
<dbReference type="PANTHER" id="PTHR48080">
    <property type="entry name" value="D-GALACTONATE DEHYDRATASE-RELATED"/>
    <property type="match status" value="1"/>
</dbReference>
<dbReference type="Pfam" id="PF13378">
    <property type="entry name" value="MR_MLE_C"/>
    <property type="match status" value="1"/>
</dbReference>
<dbReference type="SFLD" id="SFLDF00118">
    <property type="entry name" value="D-tartrate_dehydratase"/>
    <property type="match status" value="1"/>
</dbReference>
<dbReference type="SFLD" id="SFLDG00179">
    <property type="entry name" value="mandelate_racemase"/>
    <property type="match status" value="1"/>
</dbReference>
<dbReference type="SMART" id="SM00922">
    <property type="entry name" value="MR_MLE"/>
    <property type="match status" value="1"/>
</dbReference>
<dbReference type="SUPFAM" id="SSF51604">
    <property type="entry name" value="Enolase C-terminal domain-like"/>
    <property type="match status" value="1"/>
</dbReference>
<dbReference type="SUPFAM" id="SSF54826">
    <property type="entry name" value="Enolase N-terminal domain-like"/>
    <property type="match status" value="1"/>
</dbReference>
<proteinExistence type="evidence at protein level"/>
<reference key="1">
    <citation type="journal article" date="2002" name="DNA Res.">
        <title>Complete genomic sequence of nitrogen-fixing symbiotic bacterium Bradyrhizobium japonicum USDA110.</title>
        <authorList>
            <person name="Kaneko T."/>
            <person name="Nakamura Y."/>
            <person name="Sato S."/>
            <person name="Minamisawa K."/>
            <person name="Uchiumi T."/>
            <person name="Sasamoto S."/>
            <person name="Watanabe A."/>
            <person name="Idesawa K."/>
            <person name="Iriguchi M."/>
            <person name="Kawashima K."/>
            <person name="Kohara M."/>
            <person name="Matsumoto M."/>
            <person name="Shimpo S."/>
            <person name="Tsuruoka H."/>
            <person name="Wada T."/>
            <person name="Yamada M."/>
            <person name="Tabata S."/>
        </authorList>
    </citation>
    <scope>NUCLEOTIDE SEQUENCE [LARGE SCALE GENOMIC DNA]</scope>
    <source>
        <strain>JCM 10833 / BCRC 13528 / IAM 13628 / NBRC 14792 / USDA 110</strain>
    </source>
</reference>
<reference key="2">
    <citation type="journal article" date="2014" name="PLoS ONE">
        <title>Finding sequences for over 270 orphan enzymes.</title>
        <authorList>
            <person name="Shearer A.G."/>
            <person name="Altman T."/>
            <person name="Rhee C.D."/>
        </authorList>
    </citation>
    <scope>IDENTIFICATION</scope>
</reference>
<reference key="3">
    <citation type="journal article" date="2006" name="Biochemistry">
        <title>Evolution of enzymatic activities in the enolase superfamily: D-tartrate dehydratase from Bradyrhizobium japonicum.</title>
        <authorList>
            <person name="Yew W.S."/>
            <person name="Fedorov A.A."/>
            <person name="Fedorov E.V."/>
            <person name="Wood B.M."/>
            <person name="Almo S.C."/>
            <person name="Gerlt J.A."/>
        </authorList>
    </citation>
    <scope>X-RAY CRYSTALLOGRAPHY (2.30 ANGSTROMS) OF MUTANT LYS-184 IN COMPLEX WITH D(-)-TARTRATE AND MAGNESIUM</scope>
    <scope>COFACTOR</scope>
    <scope>ACTIVE SITE</scope>
    <scope>FUNCTION</scope>
    <scope>CATALYTIC ACTIVITY</scope>
    <scope>SUBUNIT</scope>
    <scope>BIOPHYSICOCHEMICAL PROPERTIES</scope>
    <scope>REACTION MECHANISM</scope>
    <scope>MUTAGENESIS OF LYS-102; LYS-184 AND HIS-322</scope>
</reference>
<organism>
    <name type="scientific">Bradyrhizobium diazoefficiens (strain JCM 10833 / BCRC 13528 / IAM 13628 / NBRC 14792 / USDA 110)</name>
    <dbReference type="NCBI Taxonomy" id="224911"/>
    <lineage>
        <taxon>Bacteria</taxon>
        <taxon>Pseudomonadati</taxon>
        <taxon>Pseudomonadota</taxon>
        <taxon>Alphaproteobacteria</taxon>
        <taxon>Hyphomicrobiales</taxon>
        <taxon>Nitrobacteraceae</taxon>
        <taxon>Bradyrhizobium</taxon>
    </lineage>
</organism>
<feature type="chain" id="PRO_0000430443" description="D(-)-tartrate dehydratase">
    <location>
        <begin position="1"/>
        <end position="389"/>
    </location>
</feature>
<feature type="active site" description="acceptor" evidence="1">
    <location>
        <position position="184"/>
    </location>
</feature>
<feature type="active site" description="Proton donor/acceptor" evidence="1">
    <location>
        <position position="322"/>
    </location>
</feature>
<feature type="binding site">
    <location>
        <position position="21"/>
    </location>
    <ligand>
        <name>substrate</name>
    </ligand>
</feature>
<feature type="binding site">
    <location>
        <position position="55"/>
    </location>
    <ligand>
        <name>substrate</name>
    </ligand>
</feature>
<feature type="binding site">
    <location>
        <position position="102"/>
    </location>
    <ligand>
        <name>substrate</name>
    </ligand>
</feature>
<feature type="binding site">
    <location>
        <position position="156"/>
    </location>
    <ligand>
        <name>substrate</name>
    </ligand>
</feature>
<feature type="binding site">
    <location>
        <begin position="182"/>
        <end position="184"/>
    </location>
    <ligand>
        <name>substrate</name>
    </ligand>
</feature>
<feature type="binding site">
    <location>
        <position position="182"/>
    </location>
    <ligand>
        <name>substrate</name>
    </ligand>
</feature>
<feature type="binding site">
    <location>
        <begin position="213"/>
        <end position="215"/>
    </location>
    <ligand>
        <name>substrate</name>
    </ligand>
</feature>
<feature type="binding site" evidence="1">
    <location>
        <position position="213"/>
    </location>
    <ligand>
        <name>Mg(2+)</name>
        <dbReference type="ChEBI" id="CHEBI:18420"/>
    </ligand>
</feature>
<feature type="binding site" evidence="1">
    <location>
        <position position="239"/>
    </location>
    <ligand>
        <name>Mg(2+)</name>
        <dbReference type="ChEBI" id="CHEBI:18420"/>
    </ligand>
</feature>
<feature type="binding site">
    <location>
        <position position="239"/>
    </location>
    <ligand>
        <name>substrate</name>
    </ligand>
</feature>
<feature type="binding site" evidence="1">
    <location>
        <position position="265"/>
    </location>
    <ligand>
        <name>Mg(2+)</name>
        <dbReference type="ChEBI" id="CHEBI:18420"/>
    </ligand>
</feature>
<feature type="binding site">
    <location>
        <position position="265"/>
    </location>
    <ligand>
        <name>substrate</name>
    </ligand>
</feature>
<feature type="binding site">
    <location>
        <position position="322"/>
    </location>
    <ligand>
        <name>substrate</name>
    </ligand>
</feature>
<feature type="binding site">
    <location>
        <begin position="341"/>
        <end position="343"/>
    </location>
    <ligand>
        <name>substrate</name>
    </ligand>
</feature>
<feature type="site" description="Transition state stabilizer">
    <location>
        <position position="55"/>
    </location>
</feature>
<feature type="site" description="Transition state stabilizer">
    <location>
        <position position="182"/>
    </location>
</feature>
<feature type="site" description="Increases basicity of active site His">
    <location>
        <position position="292"/>
    </location>
</feature>
<feature type="site" description="Transition state stabilizer">
    <location>
        <position position="341"/>
    </location>
</feature>
<feature type="mutagenesis site" description="Loss of dehydration activity." evidence="1">
    <original>K</original>
    <variation>A</variation>
    <variation>M</variation>
    <location>
        <position position="102"/>
    </location>
</feature>
<feature type="mutagenesis site" description="Loss of dehydration activity." evidence="1">
    <original>K</original>
    <variation>A</variation>
    <location>
        <position position="184"/>
    </location>
</feature>
<feature type="mutagenesis site" description="Reduced dehydration activity." evidence="1">
    <original>K</original>
    <variation>R</variation>
    <location>
        <position position="184"/>
    </location>
</feature>
<feature type="mutagenesis site" description="Decreased but measurable dehydration activity." evidence="1">
    <original>H</original>
    <variation>N</variation>
    <location>
        <position position="322"/>
    </location>
</feature>
<feature type="strand" evidence="4">
    <location>
        <begin position="5"/>
        <end position="14"/>
    </location>
</feature>
<feature type="strand" evidence="4">
    <location>
        <begin position="30"/>
        <end position="41"/>
    </location>
</feature>
<feature type="strand" evidence="4">
    <location>
        <begin position="43"/>
        <end position="52"/>
    </location>
</feature>
<feature type="helix" evidence="4">
    <location>
        <begin position="61"/>
        <end position="66"/>
    </location>
</feature>
<feature type="helix" evidence="4">
    <location>
        <begin position="68"/>
        <end position="73"/>
    </location>
</feature>
<feature type="helix" evidence="4">
    <location>
        <begin position="77"/>
        <end position="79"/>
    </location>
</feature>
<feature type="strand" evidence="4">
    <location>
        <begin position="85"/>
        <end position="88"/>
    </location>
</feature>
<feature type="helix" evidence="4">
    <location>
        <begin position="90"/>
        <end position="97"/>
    </location>
</feature>
<feature type="turn" evidence="4">
    <location>
        <begin position="98"/>
        <end position="100"/>
    </location>
</feature>
<feature type="helix" evidence="4">
    <location>
        <begin position="108"/>
        <end position="128"/>
    </location>
</feature>
<feature type="helix" evidence="4">
    <location>
        <begin position="132"/>
        <end position="139"/>
    </location>
</feature>
<feature type="strand" evidence="4">
    <location>
        <begin position="147"/>
        <end position="153"/>
    </location>
</feature>
<feature type="helix" evidence="4">
    <location>
        <begin position="163"/>
        <end position="174"/>
    </location>
</feature>
<feature type="turn" evidence="4">
    <location>
        <begin position="175"/>
        <end position="177"/>
    </location>
</feature>
<feature type="strand" evidence="4">
    <location>
        <begin position="179"/>
        <end position="184"/>
    </location>
</feature>
<feature type="strand" evidence="4">
    <location>
        <begin position="186"/>
        <end position="188"/>
    </location>
</feature>
<feature type="helix" evidence="4">
    <location>
        <begin position="190"/>
        <end position="204"/>
    </location>
</feature>
<feature type="turn" evidence="4">
    <location>
        <begin position="205"/>
        <end position="207"/>
    </location>
</feature>
<feature type="strand" evidence="4">
    <location>
        <begin position="209"/>
        <end position="213"/>
    </location>
</feature>
<feature type="helix" evidence="4">
    <location>
        <begin position="220"/>
        <end position="230"/>
    </location>
</feature>
<feature type="strand" evidence="4">
    <location>
        <begin position="236"/>
        <end position="239"/>
    </location>
</feature>
<feature type="helix" evidence="4">
    <location>
        <begin position="247"/>
        <end position="253"/>
    </location>
</feature>
<feature type="turn" evidence="4">
    <location>
        <begin position="254"/>
        <end position="256"/>
    </location>
</feature>
<feature type="strand" evidence="4">
    <location>
        <begin position="261"/>
        <end position="263"/>
    </location>
</feature>
<feature type="helix" evidence="4">
    <location>
        <begin position="270"/>
        <end position="279"/>
    </location>
</feature>
<feature type="turn" evidence="4">
    <location>
        <begin position="284"/>
        <end position="286"/>
    </location>
</feature>
<feature type="turn" evidence="4">
    <location>
        <begin position="293"/>
        <end position="297"/>
    </location>
</feature>
<feature type="helix" evidence="4">
    <location>
        <begin position="299"/>
        <end position="311"/>
    </location>
</feature>
<feature type="helix" evidence="4">
    <location>
        <begin position="316"/>
        <end position="318"/>
    </location>
</feature>
<feature type="helix" evidence="4">
    <location>
        <begin position="326"/>
        <end position="335"/>
    </location>
</feature>
<feature type="strand" evidence="4">
    <location>
        <begin position="340"/>
        <end position="342"/>
    </location>
</feature>
<feature type="turn" evidence="4">
    <location>
        <begin position="348"/>
        <end position="350"/>
    </location>
</feature>
<feature type="strand" evidence="4">
    <location>
        <begin position="363"/>
        <end position="365"/>
    </location>
</feature>
<feature type="helix" evidence="4">
    <location>
        <begin position="374"/>
        <end position="376"/>
    </location>
</feature>
<feature type="helix" evidence="4">
    <location>
        <begin position="378"/>
        <end position="385"/>
    </location>
</feature>
<name>TARD_BRADU</name>
<protein>
    <recommendedName>
        <fullName>D(-)-tartrate dehydratase</fullName>
        <ecNumber>4.2.1.81</ecNumber>
    </recommendedName>
</protein>
<keyword id="KW-0002">3D-structure</keyword>
<keyword id="KW-0456">Lyase</keyword>
<keyword id="KW-0460">Magnesium</keyword>
<keyword id="KW-0479">Metal-binding</keyword>
<keyword id="KW-1185">Reference proteome</keyword>